<protein>
    <recommendedName>
        <fullName>Probable N-acetyltransferase 14</fullName>
        <ecNumber evidence="5">2.3.1.-</ecNumber>
    </recommendedName>
</protein>
<name>NAT14_MACFA</name>
<organism>
    <name type="scientific">Macaca fascicularis</name>
    <name type="common">Crab-eating macaque</name>
    <name type="synonym">Cynomolgus monkey</name>
    <dbReference type="NCBI Taxonomy" id="9541"/>
    <lineage>
        <taxon>Eukaryota</taxon>
        <taxon>Metazoa</taxon>
        <taxon>Chordata</taxon>
        <taxon>Craniata</taxon>
        <taxon>Vertebrata</taxon>
        <taxon>Euteleostomi</taxon>
        <taxon>Mammalia</taxon>
        <taxon>Eutheria</taxon>
        <taxon>Euarchontoglires</taxon>
        <taxon>Primates</taxon>
        <taxon>Haplorrhini</taxon>
        <taxon>Catarrhini</taxon>
        <taxon>Cercopithecidae</taxon>
        <taxon>Cercopithecinae</taxon>
        <taxon>Macaca</taxon>
    </lineage>
</organism>
<dbReference type="EC" id="2.3.1.-" evidence="5"/>
<dbReference type="EMBL" id="AB046000">
    <property type="protein sequence ID" value="BAB01582.1"/>
    <property type="molecule type" value="mRNA"/>
</dbReference>
<dbReference type="RefSeq" id="NP_001306464.1">
    <property type="nucleotide sequence ID" value="NM_001319535.1"/>
</dbReference>
<dbReference type="RefSeq" id="XP_015297025.1">
    <property type="nucleotide sequence ID" value="XM_015441539.1"/>
</dbReference>
<dbReference type="eggNOG" id="ENOG502RYNT">
    <property type="taxonomic scope" value="Eukaryota"/>
</dbReference>
<dbReference type="Proteomes" id="UP000233100">
    <property type="component" value="Unplaced"/>
</dbReference>
<dbReference type="GO" id="GO:0016020">
    <property type="term" value="C:membrane"/>
    <property type="evidence" value="ECO:0007669"/>
    <property type="project" value="UniProtKB-SubCell"/>
</dbReference>
<dbReference type="GO" id="GO:0003677">
    <property type="term" value="F:DNA binding"/>
    <property type="evidence" value="ECO:0007669"/>
    <property type="project" value="UniProtKB-KW"/>
</dbReference>
<dbReference type="GO" id="GO:0008080">
    <property type="term" value="F:N-acetyltransferase activity"/>
    <property type="evidence" value="ECO:0007669"/>
    <property type="project" value="InterPro"/>
</dbReference>
<dbReference type="Gene3D" id="3.40.630.30">
    <property type="match status" value="1"/>
</dbReference>
<dbReference type="InterPro" id="IPR016181">
    <property type="entry name" value="Acyl_CoA_acyltransferase"/>
</dbReference>
<dbReference type="InterPro" id="IPR000182">
    <property type="entry name" value="GNAT_dom"/>
</dbReference>
<dbReference type="InterPro" id="IPR050769">
    <property type="entry name" value="NAT_camello-type"/>
</dbReference>
<dbReference type="PANTHER" id="PTHR13947">
    <property type="entry name" value="GNAT FAMILY N-ACETYLTRANSFERASE"/>
    <property type="match status" value="1"/>
</dbReference>
<dbReference type="PANTHER" id="PTHR13947:SF51">
    <property type="entry name" value="N-ACETYLTRANSFERASE 14-RELATED"/>
    <property type="match status" value="1"/>
</dbReference>
<dbReference type="Pfam" id="PF00583">
    <property type="entry name" value="Acetyltransf_1"/>
    <property type="match status" value="1"/>
</dbReference>
<dbReference type="SUPFAM" id="SSF55729">
    <property type="entry name" value="Acyl-CoA N-acyltransferases (Nat)"/>
    <property type="match status" value="1"/>
</dbReference>
<dbReference type="PROSITE" id="PS51186">
    <property type="entry name" value="GNAT"/>
    <property type="match status" value="1"/>
</dbReference>
<evidence type="ECO:0000250" key="1"/>
<evidence type="ECO:0000250" key="2">
    <source>
        <dbReference type="UniProtKB" id="Q8WUY8"/>
    </source>
</evidence>
<evidence type="ECO:0000255" key="3"/>
<evidence type="ECO:0000255" key="4">
    <source>
        <dbReference type="PROSITE-ProRule" id="PRU00532"/>
    </source>
</evidence>
<evidence type="ECO:0000305" key="5"/>
<reference key="1">
    <citation type="submission" date="2000-07" db="EMBL/GenBank/DDBJ databases">
        <title>Isolation of full-length cDNA clones from macaque brain cDNA libraries.</title>
        <authorList>
            <person name="Osada N."/>
            <person name="Hida M."/>
            <person name="Kusuda J."/>
            <person name="Tanuma R."/>
            <person name="Iseki K."/>
            <person name="Hirai M."/>
            <person name="Terao K."/>
            <person name="Suzuki Y."/>
            <person name="Sugano S."/>
            <person name="Hashimoto K."/>
        </authorList>
    </citation>
    <scope>NUCLEOTIDE SEQUENCE [LARGE SCALE MRNA]</scope>
    <source>
        <tissue>Brain cortex</tissue>
    </source>
</reference>
<keyword id="KW-0010">Activator</keyword>
<keyword id="KW-0012">Acyltransferase</keyword>
<keyword id="KW-0238">DNA-binding</keyword>
<keyword id="KW-0472">Membrane</keyword>
<keyword id="KW-1185">Reference proteome</keyword>
<keyword id="KW-0804">Transcription</keyword>
<keyword id="KW-0805">Transcription regulation</keyword>
<keyword id="KW-0808">Transferase</keyword>
<keyword id="KW-0812">Transmembrane</keyword>
<keyword id="KW-1133">Transmembrane helix</keyword>
<feature type="chain" id="PRO_0000307787" description="Probable N-acetyltransferase 14">
    <location>
        <begin position="1"/>
        <end position="206"/>
    </location>
</feature>
<feature type="transmembrane region" description="Helical" evidence="3">
    <location>
        <begin position="57"/>
        <end position="77"/>
    </location>
</feature>
<feature type="domain" description="N-acetyltransferase" evidence="4">
    <location>
        <begin position="55"/>
        <end position="206"/>
    </location>
</feature>
<accession>Q9N0D0</accession>
<gene>
    <name type="primary">NAT14</name>
    <name type="ORF">QccE-12666</name>
</gene>
<comment type="function">
    <text evidence="5">Probable acetyltransferase.</text>
</comment>
<comment type="function">
    <text evidence="2">May act as a transcription factor regulating the expression of coproporphyrinogen oxidase by binding to a promoter regulatory element.</text>
</comment>
<comment type="subcellular location">
    <subcellularLocation>
        <location evidence="1">Membrane</location>
        <topology evidence="1">Single-pass membrane protein</topology>
    </subcellularLocation>
</comment>
<comment type="similarity">
    <text evidence="5">Belongs to the camello family.</text>
</comment>
<sequence>MAPSHLSVREVREDEKPLVLEMLKAGVKDTENRVALHALTRPPALLLLAAASSGLRFVLASFALALLLPVFLAVTAVKLGLRARWGSLPPPGGLGGPWVAVRGSGDVCGVLALAPGTNAGDGARVTRLSVSRWHRRRGVGRRLLAFAEARARAWAGGMGEPRARLVVPVAVAAWGVAGMLEGCGYQAEGGWGCLGYTLVREFSKDL</sequence>
<proteinExistence type="evidence at transcript level"/>